<reference key="1">
    <citation type="journal article" date="1997" name="J. Bacteriol.">
        <title>Fatty acid biosynthesis in Pseudomonas aeruginosa: cloning and characterization of the fabAB operon encoding beta-hydroxyacyl-acyl carrier protein dehydratase (FabA) and beta-ketoacyl-acyl carrier protein synthase I (FabB).</title>
        <authorList>
            <person name="Hoang T.T."/>
            <person name="Schweizer H.P."/>
        </authorList>
    </citation>
    <scope>NUCLEOTIDE SEQUENCE [GENOMIC DNA]</scope>
    <source>
        <strain>ATCC 15692 / DSM 22644 / CIP 104116 / JCM 14847 / LMG 12228 / 1C / PRS 101 / PAO1</strain>
    </source>
</reference>
<reference key="2">
    <citation type="journal article" date="2000" name="Nature">
        <title>Complete genome sequence of Pseudomonas aeruginosa PAO1, an opportunistic pathogen.</title>
        <authorList>
            <person name="Stover C.K."/>
            <person name="Pham X.-Q.T."/>
            <person name="Erwin A.L."/>
            <person name="Mizoguchi S.D."/>
            <person name="Warrener P."/>
            <person name="Hickey M.J."/>
            <person name="Brinkman F.S.L."/>
            <person name="Hufnagle W.O."/>
            <person name="Kowalik D.J."/>
            <person name="Lagrou M."/>
            <person name="Garber R.L."/>
            <person name="Goltry L."/>
            <person name="Tolentino E."/>
            <person name="Westbrock-Wadman S."/>
            <person name="Yuan Y."/>
            <person name="Brody L.L."/>
            <person name="Coulter S.N."/>
            <person name="Folger K.R."/>
            <person name="Kas A."/>
            <person name="Larbig K."/>
            <person name="Lim R.M."/>
            <person name="Smith K.A."/>
            <person name="Spencer D.H."/>
            <person name="Wong G.K.-S."/>
            <person name="Wu Z."/>
            <person name="Paulsen I.T."/>
            <person name="Reizer J."/>
            <person name="Saier M.H. Jr."/>
            <person name="Hancock R.E.W."/>
            <person name="Lory S."/>
            <person name="Olson M.V."/>
        </authorList>
    </citation>
    <scope>NUCLEOTIDE SEQUENCE [LARGE SCALE GENOMIC DNA]</scope>
    <source>
        <strain>ATCC 15692 / DSM 22644 / CIP 104116 / JCM 14847 / LMG 12228 / 1C / PRS 101 / PAO1</strain>
    </source>
</reference>
<proteinExistence type="evidence at protein level"/>
<protein>
    <recommendedName>
        <fullName>3-hydroxydecanoyl-[acyl-carrier-protein] dehydratase</fullName>
        <ecNumber>4.2.1.59</ecNumber>
    </recommendedName>
    <alternativeName>
        <fullName>3-hydroxyacyl-[acyl-carrier-protein] dehydratase FabA</fullName>
    </alternativeName>
    <alternativeName>
        <fullName>Beta-hydroxydecanoyl thioester dehydrase</fullName>
    </alternativeName>
    <alternativeName>
        <fullName>Trans-2-decenoyl-[acyl-carrier-protein] isomerase</fullName>
        <ecNumber>5.3.3.14</ecNumber>
    </alternativeName>
</protein>
<evidence type="ECO:0000250" key="1"/>
<evidence type="ECO:0000305" key="2"/>
<evidence type="ECO:0007829" key="3">
    <source>
        <dbReference type="PDB" id="4B0I"/>
    </source>
</evidence>
<evidence type="ECO:0007829" key="4">
    <source>
        <dbReference type="PDB" id="8B72"/>
    </source>
</evidence>
<organism>
    <name type="scientific">Pseudomonas aeruginosa (strain ATCC 15692 / DSM 22644 / CIP 104116 / JCM 14847 / LMG 12228 / 1C / PRS 101 / PAO1)</name>
    <dbReference type="NCBI Taxonomy" id="208964"/>
    <lineage>
        <taxon>Bacteria</taxon>
        <taxon>Pseudomonadati</taxon>
        <taxon>Pseudomonadota</taxon>
        <taxon>Gammaproteobacteria</taxon>
        <taxon>Pseudomonadales</taxon>
        <taxon>Pseudomonadaceae</taxon>
        <taxon>Pseudomonas</taxon>
    </lineage>
</organism>
<accession>O33877</accession>
<feature type="chain" id="PRO_0000091606" description="3-hydroxydecanoyl-[acyl-carrier-protein] dehydratase">
    <location>
        <begin position="1"/>
        <end position="171"/>
    </location>
</feature>
<feature type="active site" evidence="1">
    <location>
        <position position="70"/>
    </location>
</feature>
<feature type="helix" evidence="4">
    <location>
        <begin position="9"/>
        <end position="16"/>
    </location>
</feature>
<feature type="turn" evidence="4">
    <location>
        <begin position="17"/>
        <end position="21"/>
    </location>
</feature>
<feature type="turn" evidence="4">
    <location>
        <begin position="31"/>
        <end position="33"/>
    </location>
</feature>
<feature type="strand" evidence="4">
    <location>
        <begin position="37"/>
        <end position="47"/>
    </location>
</feature>
<feature type="strand" evidence="4">
    <location>
        <begin position="53"/>
        <end position="59"/>
    </location>
</feature>
<feature type="helix" evidence="4">
    <location>
        <begin position="65"/>
        <end position="69"/>
    </location>
</feature>
<feature type="turn" evidence="3">
    <location>
        <begin position="70"/>
        <end position="73"/>
    </location>
</feature>
<feature type="helix" evidence="4">
    <location>
        <begin position="79"/>
        <end position="96"/>
    </location>
</feature>
<feature type="strand" evidence="4">
    <location>
        <begin position="101"/>
        <end position="109"/>
    </location>
</feature>
<feature type="strand" evidence="4">
    <location>
        <begin position="111"/>
        <end position="113"/>
    </location>
</feature>
<feature type="strand" evidence="4">
    <location>
        <begin position="123"/>
        <end position="134"/>
    </location>
</feature>
<feature type="strand" evidence="4">
    <location>
        <begin position="139"/>
        <end position="149"/>
    </location>
</feature>
<feature type="strand" evidence="4">
    <location>
        <begin position="152"/>
        <end position="166"/>
    </location>
</feature>
<name>FABA_PSEAE</name>
<comment type="function">
    <text evidence="1">Necessary for the introduction of cis unsaturation into fatty acids. Catalyzes the dehydration of (3R)-3-hydroxydecanoyl-ACP to E-(2)-decenoyl-ACP and then its isomerization to Z-(3)-decenoyl-ACP. Can catalyze the dehydratase reaction for beta-hydroxyacyl-ACPs with saturated chain lengths up to 16:0, being most active on intermediate chain length (By similarity).</text>
</comment>
<comment type="catalytic activity">
    <reaction>
        <text>a (3R)-hydroxyacyl-[ACP] = a (2E)-enoyl-[ACP] + H2O</text>
        <dbReference type="Rhea" id="RHEA:13097"/>
        <dbReference type="Rhea" id="RHEA-COMP:9925"/>
        <dbReference type="Rhea" id="RHEA-COMP:9945"/>
        <dbReference type="ChEBI" id="CHEBI:15377"/>
        <dbReference type="ChEBI" id="CHEBI:78784"/>
        <dbReference type="ChEBI" id="CHEBI:78827"/>
        <dbReference type="EC" id="4.2.1.59"/>
    </reaction>
</comment>
<comment type="catalytic activity">
    <reaction>
        <text>(3R)-hydroxydecanoyl-[ACP] = (2E)-decenoyl-[ACP] + H2O</text>
        <dbReference type="Rhea" id="RHEA:41860"/>
        <dbReference type="Rhea" id="RHEA-COMP:9638"/>
        <dbReference type="Rhea" id="RHEA-COMP:9639"/>
        <dbReference type="ChEBI" id="CHEBI:15377"/>
        <dbReference type="ChEBI" id="CHEBI:78466"/>
        <dbReference type="ChEBI" id="CHEBI:78467"/>
    </reaction>
</comment>
<comment type="catalytic activity">
    <reaction>
        <text>(2E)-decenoyl-[ACP] = (3Z)-decenoyl-[ACP]</text>
        <dbReference type="Rhea" id="RHEA:23568"/>
        <dbReference type="Rhea" id="RHEA-COMP:9639"/>
        <dbReference type="Rhea" id="RHEA-COMP:9927"/>
        <dbReference type="ChEBI" id="CHEBI:78467"/>
        <dbReference type="ChEBI" id="CHEBI:78798"/>
        <dbReference type="EC" id="5.3.3.14"/>
    </reaction>
</comment>
<comment type="pathway">
    <text>Lipid metabolism; fatty acid biosynthesis.</text>
</comment>
<comment type="subunit">
    <text evidence="1">Homodimer.</text>
</comment>
<comment type="subcellular location">
    <subcellularLocation>
        <location evidence="1">Cytoplasm</location>
    </subcellularLocation>
</comment>
<comment type="similarity">
    <text evidence="2">Belongs to the thioester dehydratase family. FabA subfamily.</text>
</comment>
<sequence>MTKQHAFTREDLLRCSRGELFGPGNAQLPAPNMLMIDRIVHISDVGGKYGKGELVAELDINPDLWFFACHFEGDPVMPGCLGLDAMWQLVGFYLGWQGNPGRGRALGSGEVKFFGQVLPTAKKVTYNIHIKRTINRSLVLAIADGTVSVDGREIYSAEGLRVGLFTSTDSF</sequence>
<dbReference type="EC" id="4.2.1.59"/>
<dbReference type="EC" id="5.3.3.14"/>
<dbReference type="EMBL" id="U70470">
    <property type="protein sequence ID" value="AAC45619.1"/>
    <property type="molecule type" value="Genomic_DNA"/>
</dbReference>
<dbReference type="EMBL" id="AE004091">
    <property type="protein sequence ID" value="AAG04999.1"/>
    <property type="molecule type" value="Genomic_DNA"/>
</dbReference>
<dbReference type="PIR" id="D83443">
    <property type="entry name" value="D83443"/>
</dbReference>
<dbReference type="RefSeq" id="NP_250301.1">
    <property type="nucleotide sequence ID" value="NC_002516.2"/>
</dbReference>
<dbReference type="RefSeq" id="WP_003087475.1">
    <property type="nucleotide sequence ID" value="NZ_QZGE01000003.1"/>
</dbReference>
<dbReference type="PDB" id="4B0B">
    <property type="method" value="X-ray"/>
    <property type="resolution" value="1.90 A"/>
    <property type="chains" value="A/B=1-171"/>
</dbReference>
<dbReference type="PDB" id="4B0C">
    <property type="method" value="X-ray"/>
    <property type="resolution" value="2.70 A"/>
    <property type="chains" value="A/B/C/D/E=1-171"/>
</dbReference>
<dbReference type="PDB" id="4B0I">
    <property type="method" value="X-ray"/>
    <property type="resolution" value="2.03 A"/>
    <property type="chains" value="A/B/C/D/E=1-171"/>
</dbReference>
<dbReference type="PDB" id="4B0J">
    <property type="method" value="X-ray"/>
    <property type="resolution" value="2.50 A"/>
    <property type="chains" value="A/B/C/D/E/F/G/H/I/J/K/L/M/N/O/P/Q/R/S/T=1-171"/>
</dbReference>
<dbReference type="PDB" id="4B8U">
    <property type="method" value="X-ray"/>
    <property type="resolution" value="2.76 A"/>
    <property type="chains" value="A/B/C/D/E=1-171"/>
</dbReference>
<dbReference type="PDB" id="4CL6">
    <property type="method" value="X-ray"/>
    <property type="resolution" value="2.41 A"/>
    <property type="chains" value="A/B/C/D/E=1-171"/>
</dbReference>
<dbReference type="PDB" id="4FQ9">
    <property type="method" value="X-ray"/>
    <property type="resolution" value="2.02 A"/>
    <property type="chains" value="A/B/C/D/E/F/G/H/I/J=1-171"/>
</dbReference>
<dbReference type="PDB" id="7BHJ">
    <property type="method" value="X-ray"/>
    <property type="resolution" value="2.11 A"/>
    <property type="chains" value="A/B/C/D/E=1-171"/>
</dbReference>
<dbReference type="PDB" id="7BIS">
    <property type="method" value="X-ray"/>
    <property type="resolution" value="1.96 A"/>
    <property type="chains" value="A/B/C/D/E=1-171"/>
</dbReference>
<dbReference type="PDB" id="7BK9">
    <property type="method" value="X-ray"/>
    <property type="resolution" value="1.94 A"/>
    <property type="chains" value="A/B/C/D/E=1-171"/>
</dbReference>
<dbReference type="PDB" id="7BKA">
    <property type="method" value="X-ray"/>
    <property type="resolution" value="1.88 A"/>
    <property type="chains" value="A/B/C/D/E=1-171"/>
</dbReference>
<dbReference type="PDB" id="8B72">
    <property type="method" value="X-ray"/>
    <property type="resolution" value="1.87 A"/>
    <property type="chains" value="A/B/C/D/E=1-171"/>
</dbReference>
<dbReference type="PDBsum" id="4B0B"/>
<dbReference type="PDBsum" id="4B0C"/>
<dbReference type="PDBsum" id="4B0I"/>
<dbReference type="PDBsum" id="4B0J"/>
<dbReference type="PDBsum" id="4B8U"/>
<dbReference type="PDBsum" id="4CL6"/>
<dbReference type="PDBsum" id="4FQ9"/>
<dbReference type="PDBsum" id="7BHJ"/>
<dbReference type="PDBsum" id="7BIS"/>
<dbReference type="PDBsum" id="7BK9"/>
<dbReference type="PDBsum" id="7BKA"/>
<dbReference type="PDBsum" id="8B72"/>
<dbReference type="SMR" id="O33877"/>
<dbReference type="FunCoup" id="O33877">
    <property type="interactions" value="228"/>
</dbReference>
<dbReference type="STRING" id="208964.PA1610"/>
<dbReference type="PaxDb" id="208964-PA1610"/>
<dbReference type="DNASU" id="881984"/>
<dbReference type="GeneID" id="77221769"/>
<dbReference type="GeneID" id="881984"/>
<dbReference type="KEGG" id="pae:PA1610"/>
<dbReference type="PATRIC" id="fig|208964.12.peg.1670"/>
<dbReference type="PseudoCAP" id="PA1610"/>
<dbReference type="HOGENOM" id="CLU_097925_0_0_6"/>
<dbReference type="InParanoid" id="O33877"/>
<dbReference type="OrthoDB" id="9786735at2"/>
<dbReference type="PhylomeDB" id="O33877"/>
<dbReference type="BioCyc" id="PAER208964:G1FZ6-1640-MONOMER"/>
<dbReference type="UniPathway" id="UPA00094"/>
<dbReference type="EvolutionaryTrace" id="O33877"/>
<dbReference type="PRO" id="PR:O33877"/>
<dbReference type="Proteomes" id="UP000002438">
    <property type="component" value="Chromosome"/>
</dbReference>
<dbReference type="GO" id="GO:0005737">
    <property type="term" value="C:cytoplasm"/>
    <property type="evidence" value="ECO:0007669"/>
    <property type="project" value="UniProtKB-SubCell"/>
</dbReference>
<dbReference type="GO" id="GO:0019171">
    <property type="term" value="F:(3R)-hydroxyacyl-[acyl-carrier-protein] dehydratase activity"/>
    <property type="evidence" value="ECO:0007669"/>
    <property type="project" value="UniProtKB-UniRule"/>
</dbReference>
<dbReference type="GO" id="GO:0034017">
    <property type="term" value="F:trans-2-decenoyl-acyl-carrier-protein isomerase activity"/>
    <property type="evidence" value="ECO:0007669"/>
    <property type="project" value="UniProtKB-UniRule"/>
</dbReference>
<dbReference type="GO" id="GO:0006636">
    <property type="term" value="P:unsaturated fatty acid biosynthetic process"/>
    <property type="evidence" value="ECO:0000315"/>
    <property type="project" value="PseudoCAP"/>
</dbReference>
<dbReference type="CDD" id="cd01287">
    <property type="entry name" value="FabA"/>
    <property type="match status" value="1"/>
</dbReference>
<dbReference type="FunFam" id="3.10.129.10:FF:000003">
    <property type="entry name" value="3-hydroxydecanoyl-[acyl-carrier-protein] dehydratase"/>
    <property type="match status" value="1"/>
</dbReference>
<dbReference type="Gene3D" id="3.10.129.10">
    <property type="entry name" value="Hotdog Thioesterase"/>
    <property type="match status" value="1"/>
</dbReference>
<dbReference type="HAMAP" id="MF_00405">
    <property type="entry name" value="FabA"/>
    <property type="match status" value="1"/>
</dbReference>
<dbReference type="InterPro" id="IPR010083">
    <property type="entry name" value="FabA"/>
</dbReference>
<dbReference type="InterPro" id="IPR013114">
    <property type="entry name" value="FabA_FabZ"/>
</dbReference>
<dbReference type="InterPro" id="IPR029069">
    <property type="entry name" value="HotDog_dom_sf"/>
</dbReference>
<dbReference type="NCBIfam" id="TIGR01749">
    <property type="entry name" value="fabA"/>
    <property type="match status" value="1"/>
</dbReference>
<dbReference type="NCBIfam" id="NF003509">
    <property type="entry name" value="PRK05174.1"/>
    <property type="match status" value="1"/>
</dbReference>
<dbReference type="PANTHER" id="PTHR30272">
    <property type="entry name" value="3-HYDROXYACYL-[ACYL-CARRIER-PROTEIN] DEHYDRATASE"/>
    <property type="match status" value="1"/>
</dbReference>
<dbReference type="PANTHER" id="PTHR30272:SF8">
    <property type="entry name" value="3-HYDROXYDECANOYL-[ACYL-CARRIER-PROTEIN] DEHYDRATASE"/>
    <property type="match status" value="1"/>
</dbReference>
<dbReference type="Pfam" id="PF07977">
    <property type="entry name" value="FabA"/>
    <property type="match status" value="1"/>
</dbReference>
<dbReference type="SUPFAM" id="SSF54637">
    <property type="entry name" value="Thioesterase/thiol ester dehydrase-isomerase"/>
    <property type="match status" value="1"/>
</dbReference>
<gene>
    <name type="primary">fabA</name>
    <name type="ordered locus">PA1610</name>
</gene>
<keyword id="KW-0002">3D-structure</keyword>
<keyword id="KW-0963">Cytoplasm</keyword>
<keyword id="KW-0275">Fatty acid biosynthesis</keyword>
<keyword id="KW-0276">Fatty acid metabolism</keyword>
<keyword id="KW-0413">Isomerase</keyword>
<keyword id="KW-0444">Lipid biosynthesis</keyword>
<keyword id="KW-0443">Lipid metabolism</keyword>
<keyword id="KW-0456">Lyase</keyword>
<keyword id="KW-1185">Reference proteome</keyword>